<dbReference type="EC" id="5.4.99.25" evidence="1"/>
<dbReference type="EMBL" id="CP000247">
    <property type="protein sequence ID" value="ABG71236.1"/>
    <property type="molecule type" value="Genomic_DNA"/>
</dbReference>
<dbReference type="RefSeq" id="WP_000089698.1">
    <property type="nucleotide sequence ID" value="NC_008253.1"/>
</dbReference>
<dbReference type="SMR" id="Q0TCU3"/>
<dbReference type="GeneID" id="93778817"/>
<dbReference type="KEGG" id="ecp:ECP_3254"/>
<dbReference type="HOGENOM" id="CLU_032087_0_3_6"/>
<dbReference type="Proteomes" id="UP000009182">
    <property type="component" value="Chromosome"/>
</dbReference>
<dbReference type="GO" id="GO:0003723">
    <property type="term" value="F:RNA binding"/>
    <property type="evidence" value="ECO:0007669"/>
    <property type="project" value="InterPro"/>
</dbReference>
<dbReference type="GO" id="GO:0160148">
    <property type="term" value="F:tRNA pseudouridine(55) synthase activity"/>
    <property type="evidence" value="ECO:0007669"/>
    <property type="project" value="UniProtKB-EC"/>
</dbReference>
<dbReference type="GO" id="GO:1990481">
    <property type="term" value="P:mRNA pseudouridine synthesis"/>
    <property type="evidence" value="ECO:0007669"/>
    <property type="project" value="TreeGrafter"/>
</dbReference>
<dbReference type="GO" id="GO:0031119">
    <property type="term" value="P:tRNA pseudouridine synthesis"/>
    <property type="evidence" value="ECO:0007669"/>
    <property type="project" value="UniProtKB-UniRule"/>
</dbReference>
<dbReference type="CDD" id="cd02573">
    <property type="entry name" value="PseudoU_synth_EcTruB"/>
    <property type="match status" value="1"/>
</dbReference>
<dbReference type="CDD" id="cd21152">
    <property type="entry name" value="PUA_TruB_bacterial"/>
    <property type="match status" value="1"/>
</dbReference>
<dbReference type="FunFam" id="2.30.130.10:FF:000004">
    <property type="entry name" value="tRNA pseudouridine synthase B"/>
    <property type="match status" value="1"/>
</dbReference>
<dbReference type="FunFam" id="3.30.2350.10:FF:000003">
    <property type="entry name" value="tRNA pseudouridine synthase B"/>
    <property type="match status" value="1"/>
</dbReference>
<dbReference type="Gene3D" id="3.30.2350.10">
    <property type="entry name" value="Pseudouridine synthase"/>
    <property type="match status" value="1"/>
</dbReference>
<dbReference type="Gene3D" id="2.30.130.10">
    <property type="entry name" value="PUA domain"/>
    <property type="match status" value="1"/>
</dbReference>
<dbReference type="HAMAP" id="MF_01080">
    <property type="entry name" value="TruB_bact"/>
    <property type="match status" value="1"/>
</dbReference>
<dbReference type="InterPro" id="IPR020103">
    <property type="entry name" value="PsdUridine_synth_cat_dom_sf"/>
</dbReference>
<dbReference type="InterPro" id="IPR002501">
    <property type="entry name" value="PsdUridine_synth_N"/>
</dbReference>
<dbReference type="InterPro" id="IPR015947">
    <property type="entry name" value="PUA-like_sf"/>
</dbReference>
<dbReference type="InterPro" id="IPR036974">
    <property type="entry name" value="PUA_sf"/>
</dbReference>
<dbReference type="InterPro" id="IPR014780">
    <property type="entry name" value="tRNA_psdUridine_synth_TruB"/>
</dbReference>
<dbReference type="InterPro" id="IPR015240">
    <property type="entry name" value="tRNA_sdUridine_synth_fam1_C"/>
</dbReference>
<dbReference type="InterPro" id="IPR032819">
    <property type="entry name" value="TruB_C"/>
</dbReference>
<dbReference type="NCBIfam" id="TIGR00431">
    <property type="entry name" value="TruB"/>
    <property type="match status" value="1"/>
</dbReference>
<dbReference type="PANTHER" id="PTHR13767:SF2">
    <property type="entry name" value="PSEUDOURIDYLATE SYNTHASE TRUB1"/>
    <property type="match status" value="1"/>
</dbReference>
<dbReference type="PANTHER" id="PTHR13767">
    <property type="entry name" value="TRNA-PSEUDOURIDINE SYNTHASE"/>
    <property type="match status" value="1"/>
</dbReference>
<dbReference type="Pfam" id="PF09157">
    <property type="entry name" value="TruB-C_2"/>
    <property type="match status" value="1"/>
</dbReference>
<dbReference type="Pfam" id="PF16198">
    <property type="entry name" value="TruB_C_2"/>
    <property type="match status" value="1"/>
</dbReference>
<dbReference type="Pfam" id="PF01509">
    <property type="entry name" value="TruB_N"/>
    <property type="match status" value="1"/>
</dbReference>
<dbReference type="SUPFAM" id="SSF55120">
    <property type="entry name" value="Pseudouridine synthase"/>
    <property type="match status" value="1"/>
</dbReference>
<dbReference type="SUPFAM" id="SSF88697">
    <property type="entry name" value="PUA domain-like"/>
    <property type="match status" value="1"/>
</dbReference>
<name>TRUB_ECOL5</name>
<gene>
    <name evidence="1" type="primary">truB</name>
    <name type="ordered locus">ECP_3254</name>
</gene>
<accession>Q0TCU3</accession>
<protein>
    <recommendedName>
        <fullName evidence="1">tRNA pseudouridine synthase B</fullName>
        <ecNumber evidence="1">5.4.99.25</ecNumber>
    </recommendedName>
    <alternativeName>
        <fullName evidence="1">tRNA pseudouridine(55) synthase</fullName>
        <shortName evidence="1">Psi55 synthase</shortName>
    </alternativeName>
    <alternativeName>
        <fullName evidence="1">tRNA pseudouridylate synthase</fullName>
    </alternativeName>
    <alternativeName>
        <fullName evidence="1">tRNA-uridine isomerase</fullName>
    </alternativeName>
</protein>
<feature type="chain" id="PRO_1000084586" description="tRNA pseudouridine synthase B">
    <location>
        <begin position="1"/>
        <end position="314"/>
    </location>
</feature>
<feature type="active site" description="Nucleophile" evidence="1">
    <location>
        <position position="48"/>
    </location>
</feature>
<feature type="binding site" evidence="1">
    <location>
        <position position="43"/>
    </location>
    <ligand>
        <name>substrate</name>
    </ligand>
</feature>
<feature type="binding site" evidence="1">
    <location>
        <position position="76"/>
    </location>
    <ligand>
        <name>substrate</name>
    </ligand>
</feature>
<feature type="binding site" evidence="1">
    <location>
        <position position="179"/>
    </location>
    <ligand>
        <name>substrate</name>
    </ligand>
</feature>
<feature type="binding site" evidence="1">
    <location>
        <position position="200"/>
    </location>
    <ligand>
        <name>substrate</name>
    </ligand>
</feature>
<organism>
    <name type="scientific">Escherichia coli O6:K15:H31 (strain 536 / UPEC)</name>
    <dbReference type="NCBI Taxonomy" id="362663"/>
    <lineage>
        <taxon>Bacteria</taxon>
        <taxon>Pseudomonadati</taxon>
        <taxon>Pseudomonadota</taxon>
        <taxon>Gammaproteobacteria</taxon>
        <taxon>Enterobacterales</taxon>
        <taxon>Enterobacteriaceae</taxon>
        <taxon>Escherichia</taxon>
    </lineage>
</organism>
<keyword id="KW-0413">Isomerase</keyword>
<keyword id="KW-0819">tRNA processing</keyword>
<evidence type="ECO:0000255" key="1">
    <source>
        <dbReference type="HAMAP-Rule" id="MF_01080"/>
    </source>
</evidence>
<reference key="1">
    <citation type="journal article" date="2006" name="Mol. Microbiol.">
        <title>Role of pathogenicity island-associated integrases in the genome plasticity of uropathogenic Escherichia coli strain 536.</title>
        <authorList>
            <person name="Hochhut B."/>
            <person name="Wilde C."/>
            <person name="Balling G."/>
            <person name="Middendorf B."/>
            <person name="Dobrindt U."/>
            <person name="Brzuszkiewicz E."/>
            <person name="Gottschalk G."/>
            <person name="Carniel E."/>
            <person name="Hacker J."/>
        </authorList>
    </citation>
    <scope>NUCLEOTIDE SEQUENCE [LARGE SCALE GENOMIC DNA]</scope>
    <source>
        <strain>536 / UPEC</strain>
    </source>
</reference>
<proteinExistence type="inferred from homology"/>
<comment type="function">
    <text evidence="1">Responsible for synthesis of pseudouridine from uracil-55 in the psi GC loop of transfer RNAs.</text>
</comment>
<comment type="catalytic activity">
    <reaction evidence="1">
        <text>uridine(55) in tRNA = pseudouridine(55) in tRNA</text>
        <dbReference type="Rhea" id="RHEA:42532"/>
        <dbReference type="Rhea" id="RHEA-COMP:10101"/>
        <dbReference type="Rhea" id="RHEA-COMP:10102"/>
        <dbReference type="ChEBI" id="CHEBI:65314"/>
        <dbReference type="ChEBI" id="CHEBI:65315"/>
        <dbReference type="EC" id="5.4.99.25"/>
    </reaction>
</comment>
<comment type="similarity">
    <text evidence="1">Belongs to the pseudouridine synthase TruB family. Type 1 subfamily.</text>
</comment>
<sequence length="314" mass="35087">MSRPRRRGRDINGVLLLDKPQGMSSNDALQKVKRIYNANRAGHTGALDPLATGMLPICLGEATKFSQYLLDSDKRYRVIARLGQRTDTSDADGQIVEERPVTFSAEQLAAALDTFRGDIEQIPSMYSALKYQGKKLYEYARQGIEVPREARPITVYELLFIRHEGNELELEIHCSKGTYIRTIIDDLGEKLGCGAHVIYLRRLAVSKYPVERMVTLEHLRELVEQAEQQDIPAAELLDPLLMPMDSPASDYPVVNLPLTSSVYFKNGNPVRTSGAPLEGLVRVTEGENGKFIGMGEIDDEGRVAPRRLVVEYPA</sequence>